<dbReference type="EC" id="1.14.13.-" evidence="5"/>
<dbReference type="EMBL" id="CH476597">
    <property type="protein sequence ID" value="EAU36705.1"/>
    <property type="molecule type" value="Genomic_DNA"/>
</dbReference>
<dbReference type="RefSeq" id="XP_001212609.1">
    <property type="nucleotide sequence ID" value="XM_001212609.1"/>
</dbReference>
<dbReference type="SMR" id="Q0CSA3"/>
<dbReference type="EnsemblFungi" id="EAU36705">
    <property type="protein sequence ID" value="EAU36705"/>
    <property type="gene ID" value="ATEG_03431"/>
</dbReference>
<dbReference type="GeneID" id="4317823"/>
<dbReference type="VEuPathDB" id="FungiDB:ATEG_03431"/>
<dbReference type="eggNOG" id="KOG1399">
    <property type="taxonomic scope" value="Eukaryota"/>
</dbReference>
<dbReference type="HOGENOM" id="CLU_006937_6_2_1"/>
<dbReference type="OMA" id="SKGCHAW"/>
<dbReference type="OrthoDB" id="74360at2759"/>
<dbReference type="Proteomes" id="UP000007963">
    <property type="component" value="Unassembled WGS sequence"/>
</dbReference>
<dbReference type="GO" id="GO:0050660">
    <property type="term" value="F:flavin adenine dinucleotide binding"/>
    <property type="evidence" value="ECO:0007669"/>
    <property type="project" value="InterPro"/>
</dbReference>
<dbReference type="GO" id="GO:0004499">
    <property type="term" value="F:N,N-dimethylaniline monooxygenase activity"/>
    <property type="evidence" value="ECO:0007669"/>
    <property type="project" value="InterPro"/>
</dbReference>
<dbReference type="GO" id="GO:0050661">
    <property type="term" value="F:NADP binding"/>
    <property type="evidence" value="ECO:0007669"/>
    <property type="project" value="InterPro"/>
</dbReference>
<dbReference type="Gene3D" id="3.50.50.60">
    <property type="entry name" value="FAD/NAD(P)-binding domain"/>
    <property type="match status" value="3"/>
</dbReference>
<dbReference type="InterPro" id="IPR051209">
    <property type="entry name" value="FAD-bind_Monooxygenase_sf"/>
</dbReference>
<dbReference type="InterPro" id="IPR036188">
    <property type="entry name" value="FAD/NAD-bd_sf"/>
</dbReference>
<dbReference type="InterPro" id="IPR020946">
    <property type="entry name" value="Flavin_mOase-like"/>
</dbReference>
<dbReference type="PANTHER" id="PTHR42877">
    <property type="entry name" value="L-ORNITHINE N(5)-MONOOXYGENASE-RELATED"/>
    <property type="match status" value="1"/>
</dbReference>
<dbReference type="PANTHER" id="PTHR42877:SF11">
    <property type="entry name" value="MONOOXYGENASE, PUTATIVE (AFU_ORTHOLOGUE AFUA_6G13790)-RELATED"/>
    <property type="match status" value="1"/>
</dbReference>
<dbReference type="Pfam" id="PF00743">
    <property type="entry name" value="FMO-like"/>
    <property type="match status" value="1"/>
</dbReference>
<dbReference type="SUPFAM" id="SSF51905">
    <property type="entry name" value="FAD/NAD(P)-binding domain"/>
    <property type="match status" value="3"/>
</dbReference>
<protein>
    <recommendedName>
        <fullName evidence="3">FAD-binding monooxygenase tazF</fullName>
        <ecNumber evidence="5">1.14.13.-</ecNumber>
    </recommendedName>
    <alternativeName>
        <fullName evidence="3">Azaphilone biosynthesis cluster protein F</fullName>
    </alternativeName>
</protein>
<comment type="function">
    <text evidence="2 5">FAD-binding monooxygenase; part of the gene cluster that mediates the biosynthesis of azaterrilone A and other azaphilones, a class of fungal metabolites characterized by a highly oxygenated pyrano-quinone bicyclic core and exhibiting a broad range of bioactivities (PubMed:35398258). The first step of the pathway begins with the non-reducing polyketide synthase tazA that assembles one acetyl-CoA starter unit, five malonyl-CoA units, and catalyzes a series of Claisen condensations, methylation, PT-mediated cyclization, and finally releases the first hexaketide precursor through the R-domain. The tazA product then undergoes reduction on its terminal ketone and the following pyran-ring formation by yet undetermined enzyme(s). Dehydration and enoyl reduction, possibly involving the trans-enoyl reductase tazE leads to the next intermediate. TazD is predicted as an acetyltransferase and might catalyze the acetylation steps leading to the synthesis of azaterrilone A. Azaterrilone A is not the final product of the taz pathway and both the highly reducing polyketide synthase tazB and the dual enzyme tazHJ catalyze late steps of the pathway, leading to the production of the 2 final stereoisomers that contain additional polyketide modification whose structures have still to be determined (Probable).</text>
</comment>
<comment type="cofactor">
    <cofactor evidence="1">
        <name>FAD</name>
        <dbReference type="ChEBI" id="CHEBI:57692"/>
    </cofactor>
    <text evidence="1">Binds 1 FAD per subunit.</text>
</comment>
<comment type="pathway">
    <text evidence="5">Secondary metabolite biosynthesis.</text>
</comment>
<comment type="induction">
    <text evidence="2">Expression is positively regulated by the azaterrilone A cluster-specific transcription factor tazR.</text>
</comment>
<comment type="similarity">
    <text evidence="4">Belongs to the FAD-binding monooxygenase family.</text>
</comment>
<name>TAZF_ASPTN</name>
<organism>
    <name type="scientific">Aspergillus terreus (strain NIH 2624 / FGSC A1156)</name>
    <dbReference type="NCBI Taxonomy" id="341663"/>
    <lineage>
        <taxon>Eukaryota</taxon>
        <taxon>Fungi</taxon>
        <taxon>Dikarya</taxon>
        <taxon>Ascomycota</taxon>
        <taxon>Pezizomycotina</taxon>
        <taxon>Eurotiomycetes</taxon>
        <taxon>Eurotiomycetidae</taxon>
        <taxon>Eurotiales</taxon>
        <taxon>Aspergillaceae</taxon>
        <taxon>Aspergillus</taxon>
        <taxon>Aspergillus subgen. Circumdati</taxon>
    </lineage>
</organism>
<accession>Q0CSA3</accession>
<proteinExistence type="evidence at transcript level"/>
<evidence type="ECO:0000250" key="1">
    <source>
        <dbReference type="UniProtKB" id="H3JQW0"/>
    </source>
</evidence>
<evidence type="ECO:0000269" key="2">
    <source>
    </source>
</evidence>
<evidence type="ECO:0000303" key="3">
    <source>
    </source>
</evidence>
<evidence type="ECO:0000305" key="4"/>
<evidence type="ECO:0000305" key="5">
    <source>
    </source>
</evidence>
<sequence length="561" mass="63906">MPSNESTCLGSDRNMQTAWKLNASTPGFTPKKLRVVCIGAGLSGLTLAYKLKHERPMDFVDLRIYEKNHEVGGTWLDNVYPGVGCDIPSPSYVFPFEPNPDWSKFYVGGAEIQQYILRTTAKYGLKERIVFNTRLLKAEWNEDSAKWKLQLEQDGRVFDDETDVLINGTGCLSQWKWPDIEGLDCFKGKLLHSARWDPEYNWEGKRIAVIGNGSSALQLVPSLQPKAAKLVNYIRHPTWVSVNFCPDLTRDGMGSNFEFTEEEKQQFRDDPEMFFQYRKKVEHGVNTVLQMMISGSGEHKFLHETVEGLMRQRLADRPDLIDKMIPNYEIGCRRLSPGDGYLEALQAANARPSFANINRITPTGFETDEGEEEFDLIACATGFNTSYIPPFKMTGRGGRRLDVEWKDKPAAYFATCAAGFPNYFIFAGPNAPIGHGSVNRMIWFQADYMLNWVEKIATEDIRSVAVKDSAVRDFNEFAKENLKRFVWSKGCHAWYSKKTDGEDNIVTAMYPGSLLHFKVYLDKIRGEHFDIQYNTSNMFGFLGNGELALEREKDGDMAFYM</sequence>
<keyword id="KW-0274">FAD</keyword>
<keyword id="KW-0285">Flavoprotein</keyword>
<keyword id="KW-0503">Monooxygenase</keyword>
<keyword id="KW-0521">NADP</keyword>
<keyword id="KW-0560">Oxidoreductase</keyword>
<keyword id="KW-1185">Reference proteome</keyword>
<reference key="1">
    <citation type="submission" date="2005-09" db="EMBL/GenBank/DDBJ databases">
        <title>Annotation of the Aspergillus terreus NIH2624 genome.</title>
        <authorList>
            <person name="Birren B.W."/>
            <person name="Lander E.S."/>
            <person name="Galagan J.E."/>
            <person name="Nusbaum C."/>
            <person name="Devon K."/>
            <person name="Henn M."/>
            <person name="Ma L.-J."/>
            <person name="Jaffe D.B."/>
            <person name="Butler J."/>
            <person name="Alvarez P."/>
            <person name="Gnerre S."/>
            <person name="Grabherr M."/>
            <person name="Kleber M."/>
            <person name="Mauceli E.W."/>
            <person name="Brockman W."/>
            <person name="Rounsley S."/>
            <person name="Young S.K."/>
            <person name="LaButti K."/>
            <person name="Pushparaj V."/>
            <person name="DeCaprio D."/>
            <person name="Crawford M."/>
            <person name="Koehrsen M."/>
            <person name="Engels R."/>
            <person name="Montgomery P."/>
            <person name="Pearson M."/>
            <person name="Howarth C."/>
            <person name="Larson L."/>
            <person name="Luoma S."/>
            <person name="White J."/>
            <person name="Alvarado L."/>
            <person name="Kodira C.D."/>
            <person name="Zeng Q."/>
            <person name="Oleary S."/>
            <person name="Yandava C."/>
            <person name="Denning D.W."/>
            <person name="Nierman W.C."/>
            <person name="Milne T."/>
            <person name="Madden K."/>
        </authorList>
    </citation>
    <scope>NUCLEOTIDE SEQUENCE [LARGE SCALE GENOMIC DNA]</scope>
    <source>
        <strain>NIH 2624 / FGSC A1156</strain>
    </source>
</reference>
<reference key="2">
    <citation type="journal article" date="2022" name="Fungal Genet. Biol.">
        <title>Characterization of a silent azaphilone biosynthesis gene cluster in Aspergillus terreus NIH 2624.</title>
        <authorList>
            <person name="Sun W.W."/>
            <person name="Li C.Y."/>
            <person name="Chiang Y.M."/>
            <person name="Lin T.S."/>
            <person name="Warren S."/>
            <person name="Chang F.R."/>
            <person name="Wang C.C.C."/>
        </authorList>
    </citation>
    <scope>FUNCTION</scope>
    <scope>INDUCTION</scope>
    <scope>PATHWAY</scope>
</reference>
<gene>
    <name evidence="3" type="primary">tazF</name>
    <name type="ORF">ATEG_03431</name>
</gene>
<feature type="chain" id="PRO_0000456066" description="FAD-binding monooxygenase tazF">
    <location>
        <begin position="1"/>
        <end position="561"/>
    </location>
</feature>
<feature type="binding site" evidence="1">
    <location>
        <begin position="74"/>
        <end position="77"/>
    </location>
    <ligand>
        <name>FAD</name>
        <dbReference type="ChEBI" id="CHEBI:57692"/>
    </ligand>
</feature>
<feature type="binding site" evidence="1">
    <location>
        <begin position="84"/>
        <end position="86"/>
    </location>
    <ligand>
        <name>NADP(+)</name>
        <dbReference type="ChEBI" id="CHEBI:58349"/>
    </ligand>
</feature>
<feature type="binding site" evidence="1">
    <location>
        <begin position="86"/>
        <end position="87"/>
    </location>
    <ligand>
        <name>FAD</name>
        <dbReference type="ChEBI" id="CHEBI:57692"/>
    </ligand>
</feature>
<feature type="binding site" evidence="1">
    <location>
        <position position="92"/>
    </location>
    <ligand>
        <name>FAD</name>
        <dbReference type="ChEBI" id="CHEBI:57692"/>
    </ligand>
</feature>
<feature type="binding site" evidence="1">
    <location>
        <begin position="212"/>
        <end position="218"/>
    </location>
    <ligand>
        <name>NADP(+)</name>
        <dbReference type="ChEBI" id="CHEBI:58349"/>
    </ligand>
</feature>
<feature type="binding site" evidence="1">
    <location>
        <begin position="235"/>
        <end position="236"/>
    </location>
    <ligand>
        <name>NADP(+)</name>
        <dbReference type="ChEBI" id="CHEBI:58349"/>
    </ligand>
</feature>
<feature type="site" description="Transition state stabilizer" evidence="1">
    <location>
        <position position="334"/>
    </location>
</feature>